<organism>
    <name type="scientific">Dictyostelium discoideum</name>
    <name type="common">Social amoeba</name>
    <dbReference type="NCBI Taxonomy" id="44689"/>
    <lineage>
        <taxon>Eukaryota</taxon>
        <taxon>Amoebozoa</taxon>
        <taxon>Evosea</taxon>
        <taxon>Eumycetozoa</taxon>
        <taxon>Dictyostelia</taxon>
        <taxon>Dictyosteliales</taxon>
        <taxon>Dictyosteliaceae</taxon>
        <taxon>Dictyostelium</taxon>
    </lineage>
</organism>
<proteinExistence type="inferred from homology"/>
<gene>
    <name type="primary">cyp555A1</name>
    <name type="ORF">DDB_G0286743</name>
</gene>
<feature type="chain" id="PRO_0000318844" description="Probable cytochrome P450 555A1">
    <location>
        <begin position="1"/>
        <end position="484"/>
    </location>
</feature>
<feature type="transmembrane region" description="Helical" evidence="2">
    <location>
        <begin position="1"/>
        <end position="21"/>
    </location>
</feature>
<feature type="binding site" description="axial binding residue" evidence="1">
    <location>
        <position position="432"/>
    </location>
    <ligand>
        <name>heme</name>
        <dbReference type="ChEBI" id="CHEBI:30413"/>
    </ligand>
    <ligandPart>
        <name>Fe</name>
        <dbReference type="ChEBI" id="CHEBI:18248"/>
    </ligandPart>
</feature>
<name>C555A_DICDI</name>
<dbReference type="EC" id="1.14.-.-"/>
<dbReference type="EMBL" id="AAFI02000089">
    <property type="protein sequence ID" value="EAL64127.1"/>
    <property type="molecule type" value="Genomic_DNA"/>
</dbReference>
<dbReference type="RefSeq" id="XP_637653.1">
    <property type="nucleotide sequence ID" value="XM_632561.1"/>
</dbReference>
<dbReference type="SMR" id="Q54LA8"/>
<dbReference type="STRING" id="44689.Q54LA8"/>
<dbReference type="PaxDb" id="44689-DDB0233048"/>
<dbReference type="EnsemblProtists" id="EAL64127">
    <property type="protein sequence ID" value="EAL64127"/>
    <property type="gene ID" value="DDB_G0286743"/>
</dbReference>
<dbReference type="GeneID" id="8625793"/>
<dbReference type="KEGG" id="ddi:DDB_G0286743"/>
<dbReference type="dictyBase" id="DDB_G0286743">
    <property type="gene designation" value="cyp555A1"/>
</dbReference>
<dbReference type="VEuPathDB" id="AmoebaDB:DDB_G0286743"/>
<dbReference type="eggNOG" id="KOG0156">
    <property type="taxonomic scope" value="Eukaryota"/>
</dbReference>
<dbReference type="HOGENOM" id="CLU_001570_22_0_1"/>
<dbReference type="InParanoid" id="Q54LA8"/>
<dbReference type="OMA" id="ESHRWRP"/>
<dbReference type="PhylomeDB" id="Q54LA8"/>
<dbReference type="Reactome" id="R-DDI-211935">
    <property type="pathway name" value="Fatty acids"/>
</dbReference>
<dbReference type="Reactome" id="R-DDI-211945">
    <property type="pathway name" value="Phase I - Functionalization of compounds"/>
</dbReference>
<dbReference type="Reactome" id="R-DDI-211958">
    <property type="pathway name" value="Miscellaneous substrates"/>
</dbReference>
<dbReference type="Reactome" id="R-DDI-211981">
    <property type="pathway name" value="Xenobiotics"/>
</dbReference>
<dbReference type="Reactome" id="R-DDI-211999">
    <property type="pathway name" value="CYP2E1 reactions"/>
</dbReference>
<dbReference type="Reactome" id="R-DDI-2142670">
    <property type="pathway name" value="Synthesis of epoxy (EET) and dihydroxyeicosatrienoic acids (DHET)"/>
</dbReference>
<dbReference type="Reactome" id="R-DDI-2142816">
    <property type="pathway name" value="Synthesis of (16-20)-hydroxyeicosatetraenoic acids (HETE)"/>
</dbReference>
<dbReference type="Reactome" id="R-DDI-5423646">
    <property type="pathway name" value="Aflatoxin activation and detoxification"/>
</dbReference>
<dbReference type="Reactome" id="R-DDI-9027307">
    <property type="pathway name" value="Biosynthesis of maresin-like SPMs"/>
</dbReference>
<dbReference type="Reactome" id="R-DDI-9749641">
    <property type="pathway name" value="Aspirin ADME"/>
</dbReference>
<dbReference type="Reactome" id="R-DDI-9753281">
    <property type="pathway name" value="Paracetamol ADME"/>
</dbReference>
<dbReference type="PRO" id="PR:Q54LA8"/>
<dbReference type="Proteomes" id="UP000002195">
    <property type="component" value="Chromosome 4"/>
</dbReference>
<dbReference type="GO" id="GO:0005737">
    <property type="term" value="C:cytoplasm"/>
    <property type="evidence" value="ECO:0000318"/>
    <property type="project" value="GO_Central"/>
</dbReference>
<dbReference type="GO" id="GO:0043231">
    <property type="term" value="C:intracellular membrane-bounded organelle"/>
    <property type="evidence" value="ECO:0000318"/>
    <property type="project" value="GO_Central"/>
</dbReference>
<dbReference type="GO" id="GO:0016020">
    <property type="term" value="C:membrane"/>
    <property type="evidence" value="ECO:0007669"/>
    <property type="project" value="UniProtKB-SubCell"/>
</dbReference>
<dbReference type="GO" id="GO:0020037">
    <property type="term" value="F:heme binding"/>
    <property type="evidence" value="ECO:0000318"/>
    <property type="project" value="GO_Central"/>
</dbReference>
<dbReference type="GO" id="GO:0005506">
    <property type="term" value="F:iron ion binding"/>
    <property type="evidence" value="ECO:0007669"/>
    <property type="project" value="InterPro"/>
</dbReference>
<dbReference type="GO" id="GO:0016712">
    <property type="term" value="F:oxidoreductase activity, acting on paired donors, with incorporation or reduction of molecular oxygen, reduced flavin or flavoprotein as one donor, and incorporation of one atom of oxygen"/>
    <property type="evidence" value="ECO:0000318"/>
    <property type="project" value="GO_Central"/>
</dbReference>
<dbReference type="GO" id="GO:0006082">
    <property type="term" value="P:organic acid metabolic process"/>
    <property type="evidence" value="ECO:0000318"/>
    <property type="project" value="GO_Central"/>
</dbReference>
<dbReference type="GO" id="GO:0006805">
    <property type="term" value="P:xenobiotic metabolic process"/>
    <property type="evidence" value="ECO:0000318"/>
    <property type="project" value="GO_Central"/>
</dbReference>
<dbReference type="CDD" id="cd20617">
    <property type="entry name" value="CYP1_2-like"/>
    <property type="match status" value="1"/>
</dbReference>
<dbReference type="FunFam" id="1.10.630.10:FF:000078">
    <property type="entry name" value="Probable cytochrome P450 515A1"/>
    <property type="match status" value="1"/>
</dbReference>
<dbReference type="Gene3D" id="1.10.630.10">
    <property type="entry name" value="Cytochrome P450"/>
    <property type="match status" value="1"/>
</dbReference>
<dbReference type="InterPro" id="IPR001128">
    <property type="entry name" value="Cyt_P450"/>
</dbReference>
<dbReference type="InterPro" id="IPR017972">
    <property type="entry name" value="Cyt_P450_CS"/>
</dbReference>
<dbReference type="InterPro" id="IPR002401">
    <property type="entry name" value="Cyt_P450_E_grp-I"/>
</dbReference>
<dbReference type="InterPro" id="IPR036396">
    <property type="entry name" value="Cyt_P450_sf"/>
</dbReference>
<dbReference type="PANTHER" id="PTHR24303:SF31">
    <property type="entry name" value="CYTOCHROME P450 307A1-RELATED"/>
    <property type="match status" value="1"/>
</dbReference>
<dbReference type="PANTHER" id="PTHR24303">
    <property type="entry name" value="HEME-BINDING MONOOXYGENASE FAMILY"/>
    <property type="match status" value="1"/>
</dbReference>
<dbReference type="Pfam" id="PF00067">
    <property type="entry name" value="p450"/>
    <property type="match status" value="1"/>
</dbReference>
<dbReference type="PRINTS" id="PR00463">
    <property type="entry name" value="EP450I"/>
</dbReference>
<dbReference type="SUPFAM" id="SSF48264">
    <property type="entry name" value="Cytochrome P450"/>
    <property type="match status" value="1"/>
</dbReference>
<dbReference type="PROSITE" id="PS00086">
    <property type="entry name" value="CYTOCHROME_P450"/>
    <property type="match status" value="1"/>
</dbReference>
<keyword id="KW-0349">Heme</keyword>
<keyword id="KW-0408">Iron</keyword>
<keyword id="KW-0472">Membrane</keyword>
<keyword id="KW-0479">Metal-binding</keyword>
<keyword id="KW-0503">Monooxygenase</keyword>
<keyword id="KW-0560">Oxidoreductase</keyword>
<keyword id="KW-1185">Reference proteome</keyword>
<keyword id="KW-0812">Transmembrane</keyword>
<keyword id="KW-1133">Transmembrane helix</keyword>
<accession>Q54LA8</accession>
<sequence>MIIIVIVVFLFYFSFLNLNLNPKKKRPPSPITLPVIGNLISLLNNQPQNILFNYYKKYGKIYQLQYGIVNTVVLSEFDILKEAFIENGEVFIERYNKITKKFKSSENIVNSNGLIWKKLQSISIQELSPNIKIKKYEPMIINETNKLIDSFNEHIKSNESIDPTLNIKICFLNIIISFLFNFRYNDYKDEKVIQLVDYIHSIFRMGSHPIPQDYIPILNKFYINKTTKIHQKIFENIYEYIENQVQKRLEILNKNNNNNNNNINECFVDLLLLKFKSNLLTWNEVIKTTTDLMIAGSDTNSLFTIHLIIALTNRENIQNKVFNEILNFYILNENNKITFSNKSKTPYYNSVLKEVERRFTVSPLSQPHRTNKDIILNGYFIPSGSQIIQNVYSCHLNDKDWENPFQFNPDRFLNNNQLEKKLITFGMGPRNCLGFQFALMSIWIVNLILFKSIKFSSNKLIEEEIREGGTTLSPFPFKINLIKR</sequence>
<reference key="1">
    <citation type="journal article" date="2005" name="Nature">
        <title>The genome of the social amoeba Dictyostelium discoideum.</title>
        <authorList>
            <person name="Eichinger L."/>
            <person name="Pachebat J.A."/>
            <person name="Gloeckner G."/>
            <person name="Rajandream M.A."/>
            <person name="Sucgang R."/>
            <person name="Berriman M."/>
            <person name="Song J."/>
            <person name="Olsen R."/>
            <person name="Szafranski K."/>
            <person name="Xu Q."/>
            <person name="Tunggal B."/>
            <person name="Kummerfeld S."/>
            <person name="Madera M."/>
            <person name="Konfortov B.A."/>
            <person name="Rivero F."/>
            <person name="Bankier A.T."/>
            <person name="Lehmann R."/>
            <person name="Hamlin N."/>
            <person name="Davies R."/>
            <person name="Gaudet P."/>
            <person name="Fey P."/>
            <person name="Pilcher K."/>
            <person name="Chen G."/>
            <person name="Saunders D."/>
            <person name="Sodergren E.J."/>
            <person name="Davis P."/>
            <person name="Kerhornou A."/>
            <person name="Nie X."/>
            <person name="Hall N."/>
            <person name="Anjard C."/>
            <person name="Hemphill L."/>
            <person name="Bason N."/>
            <person name="Farbrother P."/>
            <person name="Desany B."/>
            <person name="Just E."/>
            <person name="Morio T."/>
            <person name="Rost R."/>
            <person name="Churcher C.M."/>
            <person name="Cooper J."/>
            <person name="Haydock S."/>
            <person name="van Driessche N."/>
            <person name="Cronin A."/>
            <person name="Goodhead I."/>
            <person name="Muzny D.M."/>
            <person name="Mourier T."/>
            <person name="Pain A."/>
            <person name="Lu M."/>
            <person name="Harper D."/>
            <person name="Lindsay R."/>
            <person name="Hauser H."/>
            <person name="James K.D."/>
            <person name="Quiles M."/>
            <person name="Madan Babu M."/>
            <person name="Saito T."/>
            <person name="Buchrieser C."/>
            <person name="Wardroper A."/>
            <person name="Felder M."/>
            <person name="Thangavelu M."/>
            <person name="Johnson D."/>
            <person name="Knights A."/>
            <person name="Loulseged H."/>
            <person name="Mungall K.L."/>
            <person name="Oliver K."/>
            <person name="Price C."/>
            <person name="Quail M.A."/>
            <person name="Urushihara H."/>
            <person name="Hernandez J."/>
            <person name="Rabbinowitsch E."/>
            <person name="Steffen D."/>
            <person name="Sanders M."/>
            <person name="Ma J."/>
            <person name="Kohara Y."/>
            <person name="Sharp S."/>
            <person name="Simmonds M.N."/>
            <person name="Spiegler S."/>
            <person name="Tivey A."/>
            <person name="Sugano S."/>
            <person name="White B."/>
            <person name="Walker D."/>
            <person name="Woodward J.R."/>
            <person name="Winckler T."/>
            <person name="Tanaka Y."/>
            <person name="Shaulsky G."/>
            <person name="Schleicher M."/>
            <person name="Weinstock G.M."/>
            <person name="Rosenthal A."/>
            <person name="Cox E.C."/>
            <person name="Chisholm R.L."/>
            <person name="Gibbs R.A."/>
            <person name="Loomis W.F."/>
            <person name="Platzer M."/>
            <person name="Kay R.R."/>
            <person name="Williams J.G."/>
            <person name="Dear P.H."/>
            <person name="Noegel A.A."/>
            <person name="Barrell B.G."/>
            <person name="Kuspa A."/>
        </authorList>
    </citation>
    <scope>NUCLEOTIDE SEQUENCE [LARGE SCALE GENOMIC DNA]</scope>
    <source>
        <strain>AX4</strain>
    </source>
</reference>
<evidence type="ECO:0000250" key="1"/>
<evidence type="ECO:0000255" key="2"/>
<evidence type="ECO:0000305" key="3"/>
<comment type="cofactor">
    <cofactor evidence="1">
        <name>heme</name>
        <dbReference type="ChEBI" id="CHEBI:30413"/>
    </cofactor>
</comment>
<comment type="subcellular location">
    <subcellularLocation>
        <location evidence="3">Membrane</location>
        <topology evidence="3">Single-pass membrane protein</topology>
    </subcellularLocation>
</comment>
<comment type="similarity">
    <text evidence="3">Belongs to the cytochrome P450 family.</text>
</comment>
<protein>
    <recommendedName>
        <fullName>Probable cytochrome P450 555A1</fullName>
        <ecNumber>1.14.-.-</ecNumber>
    </recommendedName>
</protein>